<evidence type="ECO:0000255" key="1"/>
<evidence type="ECO:0000256" key="2">
    <source>
        <dbReference type="SAM" id="MobiDB-lite"/>
    </source>
</evidence>
<evidence type="ECO:0000269" key="3">
    <source>
    </source>
</evidence>
<evidence type="ECO:0000303" key="4">
    <source>
    </source>
</evidence>
<evidence type="ECO:0000305" key="5"/>
<evidence type="ECO:0000305" key="6">
    <source>
    </source>
</evidence>
<comment type="function">
    <text evidence="3">Secreted effector that is involved in host plant infection (PubMed:31234322). Increases the susceptibility to P.infestans and reduces the plant growth (PubMed:31234322). Affects the expression of host genes (PubMed:31234322). PITG_15718-induced genes such as abscisic acid 8'-hydroxylase, a homolog of a salicylic acid-binding protein or a cysteine protease inhibitor gene, may negatively regulate the plant immunity or vegetative growth (PubMed:31234322). The down-regulated genes include cytochrome P450 monooxygenases essential for lignification and defense against predators and pathogens, and a member of YUCCA gene family, which is an important regulator of the phytohormone indole-3-acetic acid (IAA) biosynthesis (PubMed:31234322). Reduction of the content of IAA particularly results in the suppression of the plant immunity and reduced growth (PubMed:31234322).</text>
</comment>
<comment type="subcellular location">
    <subcellularLocation>
        <location evidence="3">Secreted</location>
    </subcellularLocation>
    <subcellularLocation>
        <location evidence="3">Host cell</location>
    </subcellularLocation>
</comment>
<comment type="induction">
    <text evidence="3">Expression is up-regulated during the infection stage of P.infestans with an increase to over 1900-fold when the sporangium and zoospore attach to plant tissue (PubMed:31234322). High expression levels are then maintained throughout the infection phase (PubMed:31234322).</text>
</comment>
<comment type="domain">
    <text evidence="6">The RxLR-dEER motif acts to carry the protein into the host cell cytoplasm through binding to cell surface phosphatidylinositol-3-phosphate.</text>
</comment>
<comment type="similarity">
    <text evidence="5">Belongs to the RxLR effector family.</text>
</comment>
<organism>
    <name type="scientific">Phytophthora infestans (strain T30-4)</name>
    <name type="common">Potato late blight agent</name>
    <dbReference type="NCBI Taxonomy" id="403677"/>
    <lineage>
        <taxon>Eukaryota</taxon>
        <taxon>Sar</taxon>
        <taxon>Stramenopiles</taxon>
        <taxon>Oomycota</taxon>
        <taxon>Peronosporales</taxon>
        <taxon>Peronosporaceae</taxon>
        <taxon>Phytophthora</taxon>
    </lineage>
</organism>
<accession>P0CU89</accession>
<accession>D0NSE5</accession>
<sequence length="154" mass="17417">MRRYAALMVIDAVLLSTSQALSSSHASELRSQLSAADAMFPSAERDGGIPNKRSLRRISVTESNDGERDEERGFQISILTKLQKWATKMKLPKTTKNLQFRIWPKEKKDPKAVYAELKLAGLDPKAAKANPEFADYLAYSKIWNHRGGRYMTRS</sequence>
<reference key="1">
    <citation type="journal article" date="2009" name="Nature">
        <title>Genome sequence and analysis of the Irish potato famine pathogen Phytophthora infestans.</title>
        <authorList>
            <consortium name="The Broad Institute Genome Sequencing Platform"/>
            <person name="Haas B.J."/>
            <person name="Kamoun S."/>
            <person name="Zody M.C."/>
            <person name="Jiang R.H."/>
            <person name="Handsaker R.E."/>
            <person name="Cano L.M."/>
            <person name="Grabherr M."/>
            <person name="Kodira C.D."/>
            <person name="Raffaele S."/>
            <person name="Torto-Alalibo T."/>
            <person name="Bozkurt T.O."/>
            <person name="Ah-Fong A.M."/>
            <person name="Alvarado L."/>
            <person name="Anderson V.L."/>
            <person name="Armstrong M.R."/>
            <person name="Avrova A."/>
            <person name="Baxter L."/>
            <person name="Beynon J."/>
            <person name="Boevink P.C."/>
            <person name="Bollmann S.R."/>
            <person name="Bos J.I."/>
            <person name="Bulone V."/>
            <person name="Cai G."/>
            <person name="Cakir C."/>
            <person name="Carrington J.C."/>
            <person name="Chawner M."/>
            <person name="Conti L."/>
            <person name="Costanzo S."/>
            <person name="Ewan R."/>
            <person name="Fahlgren N."/>
            <person name="Fischbach M.A."/>
            <person name="Fugelstad J."/>
            <person name="Gilroy E.M."/>
            <person name="Gnerre S."/>
            <person name="Green P.J."/>
            <person name="Grenville-Briggs L.J."/>
            <person name="Griffith J."/>
            <person name="Grunwald N.J."/>
            <person name="Horn K."/>
            <person name="Horner N.R."/>
            <person name="Hu C.H."/>
            <person name="Huitema E."/>
            <person name="Jeong D.H."/>
            <person name="Jones A.M."/>
            <person name="Jones J.D."/>
            <person name="Jones R.W."/>
            <person name="Karlsson E.K."/>
            <person name="Kunjeti S.G."/>
            <person name="Lamour K."/>
            <person name="Liu Z."/>
            <person name="Ma L."/>
            <person name="Maclean D."/>
            <person name="Chibucos M.C."/>
            <person name="McDonald H."/>
            <person name="McWalters J."/>
            <person name="Meijer H.J."/>
            <person name="Morgan W."/>
            <person name="Morris P.F."/>
            <person name="Munro C.A."/>
            <person name="O'Neill K."/>
            <person name="Ospina-Giraldo M."/>
            <person name="Pinzon A."/>
            <person name="Pritchard L."/>
            <person name="Ramsahoye B."/>
            <person name="Ren Q."/>
            <person name="Restrepo S."/>
            <person name="Roy S."/>
            <person name="Sadanandom A."/>
            <person name="Savidor A."/>
            <person name="Schornack S."/>
            <person name="Schwartz D.C."/>
            <person name="Schumann U.D."/>
            <person name="Schwessinger B."/>
            <person name="Seyer L."/>
            <person name="Sharpe T."/>
            <person name="Silvar C."/>
            <person name="Song J."/>
            <person name="Studholme D.J."/>
            <person name="Sykes S."/>
            <person name="Thines M."/>
            <person name="van de Vondervoort P.J."/>
            <person name="Phuntumart V."/>
            <person name="Wawra S."/>
            <person name="Weide R."/>
            <person name="Win J."/>
            <person name="Young C."/>
            <person name="Zhou S."/>
            <person name="Fry W."/>
            <person name="Meyers B.C."/>
            <person name="van West P."/>
            <person name="Ristaino J."/>
            <person name="Govers F."/>
            <person name="Birch P.R."/>
            <person name="Whisson S.C."/>
            <person name="Judelson H.S."/>
            <person name="Nusbaum C."/>
        </authorList>
    </citation>
    <scope>NUCLEOTIDE SEQUENCE [LARGE SCALE GENOMIC DNA]</scope>
    <scope>INDUCTION</scope>
    <source>
        <strain>T30-4</strain>
    </source>
</reference>
<reference key="2">
    <citation type="journal article" date="2019" name="Int. J. Mol. Sci.">
        <title>Transgenic RXLR effector PITG_15718.2 suppresses immunity and reduces vegetative growth in potato.</title>
        <authorList>
            <person name="Wang J."/>
            <person name="Gao C."/>
            <person name="Li L."/>
            <person name="Cao W."/>
            <person name="Dong R."/>
            <person name="Ding X."/>
            <person name="Zhu C."/>
            <person name="Chu Z."/>
        </authorList>
    </citation>
    <scope>INDUCTION</scope>
    <scope>FUNCTION</scope>
</reference>
<protein>
    <recommendedName>
        <fullName evidence="4">Secreted RxLR effector protein PITG_15718</fullName>
    </recommendedName>
</protein>
<proteinExistence type="evidence at transcript level"/>
<feature type="signal peptide" evidence="1">
    <location>
        <begin position="1"/>
        <end position="20"/>
    </location>
</feature>
<feature type="chain" id="PRO_5010111076" description="Secreted RxLR effector protein PITG_15718">
    <location>
        <begin position="21"/>
        <end position="154"/>
    </location>
</feature>
<feature type="region of interest" description="Disordered" evidence="2">
    <location>
        <begin position="42"/>
        <end position="70"/>
    </location>
</feature>
<feature type="short sequence motif" description="RxLR-dEER" evidence="6">
    <location>
        <begin position="53"/>
        <end position="72"/>
    </location>
</feature>
<keyword id="KW-1185">Reference proteome</keyword>
<keyword id="KW-0964">Secreted</keyword>
<keyword id="KW-0732">Signal</keyword>
<keyword id="KW-0843">Virulence</keyword>
<gene>
    <name type="ORF">PITG_15718</name>
</gene>
<name>RXLAA_PHYIT</name>
<dbReference type="EMBL" id="DS028157">
    <property type="protein sequence ID" value="EEY64490.1"/>
    <property type="molecule type" value="Genomic_DNA"/>
</dbReference>
<dbReference type="RefSeq" id="XP_002897993.1">
    <property type="nucleotide sequence ID" value="XM_002897947.1"/>
</dbReference>
<dbReference type="RefSeq" id="XP_002996886.1">
    <property type="nucleotide sequence ID" value="XM_002996840.1"/>
</dbReference>
<dbReference type="STRING" id="403677.P0CU89"/>
<dbReference type="EnsemblProtists" id="PITG_15718T0">
    <property type="protein sequence ID" value="PITG_15718T0"/>
    <property type="gene ID" value="PITG_15718"/>
</dbReference>
<dbReference type="EnsemblProtists" id="PITG_21681T0">
    <property type="protein sequence ID" value="PITG_21681T0"/>
    <property type="gene ID" value="PITG_21681"/>
</dbReference>
<dbReference type="GeneID" id="9475463"/>
<dbReference type="KEGG" id="pif:PITG_15718"/>
<dbReference type="KEGG" id="pif:PITG_21681"/>
<dbReference type="VEuPathDB" id="FungiDB:PITG_15718"/>
<dbReference type="VEuPathDB" id="FungiDB:PITG_21681"/>
<dbReference type="InParanoid" id="P0CU89"/>
<dbReference type="OrthoDB" id="120194at2759"/>
<dbReference type="Proteomes" id="UP000006643">
    <property type="component" value="Partially assembled WGS sequence"/>
</dbReference>
<dbReference type="GO" id="GO:0005576">
    <property type="term" value="C:extracellular region"/>
    <property type="evidence" value="ECO:0007669"/>
    <property type="project" value="UniProtKB-SubCell"/>
</dbReference>
<dbReference type="GO" id="GO:0043657">
    <property type="term" value="C:host cell"/>
    <property type="evidence" value="ECO:0007669"/>
    <property type="project" value="UniProtKB-SubCell"/>
</dbReference>
<dbReference type="InterPro" id="IPR031825">
    <property type="entry name" value="RXLR"/>
</dbReference>
<dbReference type="Pfam" id="PF16810">
    <property type="entry name" value="RXLR"/>
    <property type="match status" value="1"/>
</dbReference>